<gene>
    <name evidence="5" type="primary">Cylc1</name>
</gene>
<keyword id="KW-0963">Cytoplasm</keyword>
<keyword id="KW-0206">Cytoskeleton</keyword>
<keyword id="KW-0217">Developmental protein</keyword>
<keyword id="KW-0221">Differentiation</keyword>
<keyword id="KW-1185">Reference proteome</keyword>
<keyword id="KW-0677">Repeat</keyword>
<keyword id="KW-0744">Spermatogenesis</keyword>
<name>CYLC1_MOUSE</name>
<reference key="1">
    <citation type="journal article" date="2009" name="PLoS Biol.">
        <title>Lineage-specific biology revealed by a finished genome assembly of the mouse.</title>
        <authorList>
            <person name="Church D.M."/>
            <person name="Goodstadt L."/>
            <person name="Hillier L.W."/>
            <person name="Zody M.C."/>
            <person name="Goldstein S."/>
            <person name="She X."/>
            <person name="Bult C.J."/>
            <person name="Agarwala R."/>
            <person name="Cherry J.L."/>
            <person name="DiCuccio M."/>
            <person name="Hlavina W."/>
            <person name="Kapustin Y."/>
            <person name="Meric P."/>
            <person name="Maglott D."/>
            <person name="Birtle Z."/>
            <person name="Marques A.C."/>
            <person name="Graves T."/>
            <person name="Zhou S."/>
            <person name="Teague B."/>
            <person name="Potamousis K."/>
            <person name="Churas C."/>
            <person name="Place M."/>
            <person name="Herschleb J."/>
            <person name="Runnheim R."/>
            <person name="Forrest D."/>
            <person name="Amos-Landgraf J."/>
            <person name="Schwartz D.C."/>
            <person name="Cheng Z."/>
            <person name="Lindblad-Toh K."/>
            <person name="Eichler E.E."/>
            <person name="Ponting C.P."/>
        </authorList>
    </citation>
    <scope>NUCLEOTIDE SEQUENCE [LARGE SCALE GENOMIC DNA]</scope>
    <source>
        <strain>C57BL/6J</strain>
    </source>
</reference>
<reference key="2">
    <citation type="journal article" date="2014" name="Mol. Cell. Proteomics">
        <title>Immunoaffinity enrichment and mass spectrometry analysis of protein methylation.</title>
        <authorList>
            <person name="Guo A."/>
            <person name="Gu H."/>
            <person name="Zhou J."/>
            <person name="Mulhern D."/>
            <person name="Wang Y."/>
            <person name="Lee K.A."/>
            <person name="Yang V."/>
            <person name="Aguiar M."/>
            <person name="Kornhauser J."/>
            <person name="Jia X."/>
            <person name="Ren J."/>
            <person name="Beausoleil S.A."/>
            <person name="Silva J.C."/>
            <person name="Vemulapalli V."/>
            <person name="Bedford M.T."/>
            <person name="Comb M.J."/>
        </authorList>
    </citation>
    <scope>IDENTIFICATION BY MASS SPECTROMETRY [LARGE SCALE ANALYSIS]</scope>
</reference>
<reference key="3">
    <citation type="journal article" date="2024" name="Elife">
        <title>Disruption in CYLC1 leads to acrosome detachment, sperm head deformity, and male in/subfertility in humans and mice.</title>
        <authorList>
            <person name="Jin H.J."/>
            <person name="Fan Y."/>
            <person name="Yang X."/>
            <person name="Dong Y."/>
            <person name="Zhang X.Z."/>
            <person name="Geng X.Y."/>
            <person name="Yan Z."/>
            <person name="Wu L."/>
            <person name="Ma M."/>
            <person name="Li B."/>
            <person name="Lyu Q."/>
            <person name="Pan Y."/>
            <person name="Liu M."/>
            <person name="Kuang Y."/>
            <person name="Chen S.R."/>
        </authorList>
    </citation>
    <scope>FUNCTION</scope>
    <scope>SUBCELLULAR LOCATION</scope>
    <scope>DISRUPTION PHENOTYPE</scope>
    <scope>INTERACTION WITH ACTL7A; CCIN; FAM209 AND SPACA1</scope>
</reference>
<reference key="4">
    <citation type="journal article" date="2023" name="Elife">
        <title>Cylicins are a structural component of the sperm calyx being indispensable for male fertility in mice and human.</title>
        <authorList>
            <person name="Schneider S."/>
            <person name="Kovacevic A."/>
            <person name="Mayer M."/>
            <person name="Dicke A.K."/>
            <person name="Arevalo L."/>
            <person name="Koser S.A."/>
            <person name="Hansen J.N."/>
            <person name="Young S."/>
            <person name="Brenker C."/>
            <person name="Kliesch S."/>
            <person name="Wachten D."/>
            <person name="Kirfel G."/>
            <person name="Struenker T."/>
            <person name="Tuettelmann F."/>
            <person name="Schorle H."/>
        </authorList>
    </citation>
    <scope>FUNCTION</scope>
    <scope>DISRUPTION PHENOTYPE</scope>
    <scope>TISSUE SPECIFICITY</scope>
    <scope>SUBCELLULAR LOCATION</scope>
</reference>
<feature type="chain" id="PRO_0000461096" description="Cylicin-1">
    <location>
        <begin position="1"/>
        <end position="642"/>
    </location>
</feature>
<feature type="repeat" description="1" evidence="1">
    <location>
        <begin position="294"/>
        <end position="313"/>
    </location>
</feature>
<feature type="repeat" description="2" evidence="1">
    <location>
        <begin position="314"/>
        <end position="344"/>
    </location>
</feature>
<feature type="repeat" description="3" evidence="1">
    <location>
        <begin position="345"/>
        <end position="391"/>
    </location>
</feature>
<feature type="repeat" description="4" evidence="1">
    <location>
        <begin position="392"/>
        <end position="432"/>
    </location>
</feature>
<feature type="repeat" description="5" evidence="1">
    <location>
        <begin position="433"/>
        <end position="464"/>
    </location>
</feature>
<feature type="repeat" description="6" evidence="1">
    <location>
        <begin position="465"/>
        <end position="500"/>
    </location>
</feature>
<feature type="repeat" description="7" evidence="1">
    <location>
        <begin position="501"/>
        <end position="526"/>
    </location>
</feature>
<feature type="repeat" description="8" evidence="1">
    <location>
        <begin position="527"/>
        <end position="543"/>
    </location>
</feature>
<feature type="region of interest" description="Disordered" evidence="2">
    <location>
        <begin position="167"/>
        <end position="203"/>
    </location>
</feature>
<feature type="region of interest" description="Disordered" evidence="2">
    <location>
        <begin position="284"/>
        <end position="607"/>
    </location>
</feature>
<feature type="region of interest" description="8 X approximate tandem repeats" evidence="1">
    <location>
        <begin position="527"/>
        <end position="543"/>
    </location>
</feature>
<feature type="compositionally biased region" description="Polar residues" evidence="2">
    <location>
        <begin position="191"/>
        <end position="203"/>
    </location>
</feature>
<feature type="compositionally biased region" description="Basic and acidic residues" evidence="2">
    <location>
        <begin position="298"/>
        <end position="316"/>
    </location>
</feature>
<feature type="compositionally biased region" description="Basic residues" evidence="2">
    <location>
        <begin position="317"/>
        <end position="330"/>
    </location>
</feature>
<feature type="compositionally biased region" description="Basic and acidic residues" evidence="2">
    <location>
        <begin position="353"/>
        <end position="364"/>
    </location>
</feature>
<feature type="compositionally biased region" description="Low complexity" evidence="2">
    <location>
        <begin position="388"/>
        <end position="404"/>
    </location>
</feature>
<feature type="compositionally biased region" description="Basic residues" evidence="2">
    <location>
        <begin position="405"/>
        <end position="416"/>
    </location>
</feature>
<feature type="compositionally biased region" description="Basic and acidic residues" evidence="2">
    <location>
        <begin position="428"/>
        <end position="440"/>
    </location>
</feature>
<feature type="compositionally biased region" description="Acidic residues" evidence="2">
    <location>
        <begin position="454"/>
        <end position="463"/>
    </location>
</feature>
<feature type="compositionally biased region" description="Basic and acidic residues" evidence="2">
    <location>
        <begin position="465"/>
        <end position="488"/>
    </location>
</feature>
<feature type="compositionally biased region" description="Low complexity" evidence="2">
    <location>
        <begin position="513"/>
        <end position="523"/>
    </location>
</feature>
<evidence type="ECO:0000250" key="1">
    <source>
        <dbReference type="UniProtKB" id="P35663"/>
    </source>
</evidence>
<evidence type="ECO:0000256" key="2">
    <source>
        <dbReference type="SAM" id="MobiDB-lite"/>
    </source>
</evidence>
<evidence type="ECO:0000269" key="3">
    <source>
    </source>
</evidence>
<evidence type="ECO:0000269" key="4">
    <source>
    </source>
</evidence>
<evidence type="ECO:0000312" key="5">
    <source>
        <dbReference type="MGI" id="MGI:1914657"/>
    </source>
</evidence>
<organism>
    <name type="scientific">Mus musculus</name>
    <name type="common">Mouse</name>
    <dbReference type="NCBI Taxonomy" id="10090"/>
    <lineage>
        <taxon>Eukaryota</taxon>
        <taxon>Metazoa</taxon>
        <taxon>Chordata</taxon>
        <taxon>Craniata</taxon>
        <taxon>Vertebrata</taxon>
        <taxon>Euteleostomi</taxon>
        <taxon>Mammalia</taxon>
        <taxon>Eutheria</taxon>
        <taxon>Euarchontoglires</taxon>
        <taxon>Glires</taxon>
        <taxon>Rodentia</taxon>
        <taxon>Myomorpha</taxon>
        <taxon>Muroidea</taxon>
        <taxon>Muridae</taxon>
        <taxon>Murinae</taxon>
        <taxon>Mus</taxon>
        <taxon>Mus</taxon>
    </lineage>
</organism>
<comment type="function">
    <text evidence="3 4">Plays a role in the establishment of normal sperm morphology during spermatogenesis and is required for acrosome attachment to the nuclear envelope.</text>
</comment>
<comment type="subunit">
    <text evidence="4">Interacts with proteins of spermatozoa head including ACTL7A, CCIN, FAM209 and SPACA1; the interactions may be necessary for proper acrosome attachment to the nuclear envelope.</text>
</comment>
<comment type="subcellular location">
    <subcellularLocation>
        <location evidence="3 4">Cytoplasm</location>
        <location evidence="3 4">Cytoskeleton</location>
        <location evidence="3 4">Perinuclear theca</location>
        <location evidence="3 4">Calyx</location>
    </subcellularLocation>
    <subcellularLocation>
        <location evidence="3 4">Cytoplasm</location>
        <location evidence="3 4">Cytoskeleton</location>
        <location evidence="3 4">Perinuclear theca</location>
    </subcellularLocation>
    <text evidence="3 4">Localizes to the subacrosomal layer of the perinuclear theca in round and elongating spermatids. Localizes to the calyx, also known as post-acrosomal region, in spermatozoa.</text>
</comment>
<comment type="tissue specificity">
    <text evidence="3">Testis.</text>
</comment>
<comment type="disruption phenotype">
    <text evidence="3 4">CYLC1-knockout male mice have decreased fertility, resulting in reduced pregnancy rates in mating females and reduced litter size (PubMed:38013430, PubMed:38573307). Knockout spermatozoa show abnormal head morphologies and varying degrees of acrosome detachment from the nuclear envelope (PubMed:38573307).</text>
</comment>
<proteinExistence type="evidence at protein level"/>
<sequence>MSLSKLDSEKLTIEDVQTSSSSCRREINTTTYDDYILSIQTSEKQNQEHFVLTFPKTPMPDKKKRSGPSELEVAVPIQVKRKIEKDQKPTHVWINQFLRDIFLKSSFSRPFITQAPFKYLYNPQNHYTMAESRKSKNDERRKTLKIKFRGKISSCVVNLEPMRTITNGEPEILGNTEKNPSKSSHKIKLPKTSNSTSETNLEYNNSKKTLEMSLRNGNKNSMNFVLKGNAATCCKDNPNTDSKKSVEEFSDDISECINSSNMDLMLRLNEFRAEFTDLDVWSTNCSQNNAKKPLKTGGKKERDSDIDSGGSKDAKKEGKKKGKRESRKKRNTESSDAESGDSKDGKKKSKHDKKNEIKKKKDTDSTGSGSGASMVSKKGKTEKKSTGKKSTGSTGSESVDSKSTNKVKKQVKKGVMKKAVSTDSESDASSKKSKKDEKKENKGRKKKPIKDTESTDADSESEGDSTGKKNEKKDKKITKKGEKKDAKKNTASSESESDLGVNKKKTKIKEIVSFSDSTSDSYSKAGRRKNVRRSDSESEDSSGFRVLKSTDDSEASSTDSKTGMPGMRRGFRSLSKKTTFNERGKRSVTGRIPSSRERLPFPPCEPFRASPKPVHVCKCKESPSPKARYAPLPGVEWIHKLL</sequence>
<dbReference type="EMBL" id="LO016976">
    <property type="status" value="NOT_ANNOTATED_CDS"/>
    <property type="molecule type" value="Genomic_DNA"/>
</dbReference>
<dbReference type="CCDS" id="CCDS41103.2"/>
<dbReference type="RefSeq" id="XP_006528327.1">
    <property type="nucleotide sequence ID" value="XM_006528264.1"/>
</dbReference>
<dbReference type="SMR" id="A0A1B0GR13"/>
<dbReference type="FunCoup" id="A0A1B0GR13">
    <property type="interactions" value="27"/>
</dbReference>
<dbReference type="ProteomicsDB" id="371994"/>
<dbReference type="Antibodypedia" id="14277">
    <property type="antibodies" value="48 antibodies from 19 providers"/>
</dbReference>
<dbReference type="Ensembl" id="ENSMUST00000210720.3">
    <property type="protein sequence ID" value="ENSMUSP00000147334.2"/>
    <property type="gene ID" value="ENSMUSG00000073001.5"/>
</dbReference>
<dbReference type="AGR" id="MGI:1914657"/>
<dbReference type="MGI" id="MGI:1914657">
    <property type="gene designation" value="Cylc1"/>
</dbReference>
<dbReference type="VEuPathDB" id="HostDB:ENSMUSG00000073001"/>
<dbReference type="GeneTree" id="ENSGT00730000111075"/>
<dbReference type="InParanoid" id="A0A1B0GR13"/>
<dbReference type="OMA" id="RQAPFRN"/>
<dbReference type="OrthoDB" id="9838461at2759"/>
<dbReference type="BioGRID-ORCS" id="67407">
    <property type="hits" value="2 hits in 76 CRISPR screens"/>
</dbReference>
<dbReference type="ChiTaRS" id="Cylc1">
    <property type="organism name" value="mouse"/>
</dbReference>
<dbReference type="Proteomes" id="UP000000589">
    <property type="component" value="Chromosome X"/>
</dbReference>
<dbReference type="RNAct" id="A0A1B0GR13">
    <property type="molecule type" value="Protein"/>
</dbReference>
<dbReference type="Bgee" id="ENSMUSG00000073001">
    <property type="expression patterns" value="Expressed in testis and 3 other cell types or tissues"/>
</dbReference>
<dbReference type="GO" id="GO:0043159">
    <property type="term" value="C:acrosomal matrix"/>
    <property type="evidence" value="ECO:0000266"/>
    <property type="project" value="MGI"/>
</dbReference>
<dbReference type="GO" id="GO:0002080">
    <property type="term" value="C:acrosomal membrane"/>
    <property type="evidence" value="ECO:0000314"/>
    <property type="project" value="MGI"/>
</dbReference>
<dbReference type="GO" id="GO:0001669">
    <property type="term" value="C:acrosomal vesicle"/>
    <property type="evidence" value="ECO:0000314"/>
    <property type="project" value="MGI"/>
</dbReference>
<dbReference type="GO" id="GO:0033150">
    <property type="term" value="C:cytoskeletal calyx"/>
    <property type="evidence" value="ECO:0000314"/>
    <property type="project" value="UniProtKB"/>
</dbReference>
<dbReference type="GO" id="GO:0033011">
    <property type="term" value="C:perinuclear theca"/>
    <property type="evidence" value="ECO:0000314"/>
    <property type="project" value="MGI"/>
</dbReference>
<dbReference type="GO" id="GO:0042803">
    <property type="term" value="F:protein homodimerization activity"/>
    <property type="evidence" value="ECO:0000314"/>
    <property type="project" value="MGI"/>
</dbReference>
<dbReference type="GO" id="GO:0005200">
    <property type="term" value="F:structural constituent of cytoskeleton"/>
    <property type="evidence" value="ECO:0007669"/>
    <property type="project" value="InterPro"/>
</dbReference>
<dbReference type="GO" id="GO:0001675">
    <property type="term" value="P:acrosome assembly"/>
    <property type="evidence" value="ECO:0000315"/>
    <property type="project" value="MGI"/>
</dbReference>
<dbReference type="GO" id="GO:0000902">
    <property type="term" value="P:cell morphogenesis"/>
    <property type="evidence" value="ECO:0000315"/>
    <property type="project" value="MGI"/>
</dbReference>
<dbReference type="GO" id="GO:0098727">
    <property type="term" value="P:maintenance of cell number"/>
    <property type="evidence" value="ECO:0000315"/>
    <property type="project" value="MGI"/>
</dbReference>
<dbReference type="GO" id="GO:0007338">
    <property type="term" value="P:single fertilization"/>
    <property type="evidence" value="ECO:0000315"/>
    <property type="project" value="MGI"/>
</dbReference>
<dbReference type="GO" id="GO:0007283">
    <property type="term" value="P:spermatogenesis"/>
    <property type="evidence" value="ECO:0000315"/>
    <property type="project" value="UniProtKB"/>
</dbReference>
<dbReference type="InterPro" id="IPR026189">
    <property type="entry name" value="CYLC"/>
</dbReference>
<dbReference type="InterPro" id="IPR029354">
    <property type="entry name" value="Cylicin_N"/>
</dbReference>
<dbReference type="PANTHER" id="PTHR16742">
    <property type="entry name" value="CYCLICIN"/>
    <property type="match status" value="1"/>
</dbReference>
<dbReference type="PANTHER" id="PTHR16742:SF1">
    <property type="entry name" value="CYLICIN-1"/>
    <property type="match status" value="1"/>
</dbReference>
<dbReference type="Pfam" id="PF15241">
    <property type="entry name" value="Cylicin_N"/>
    <property type="match status" value="1"/>
</dbReference>
<accession>A0A1B0GR13</accession>
<protein>
    <recommendedName>
        <fullName>Cylicin-1</fullName>
    </recommendedName>
    <alternativeName>
        <fullName>Cylicin I</fullName>
    </alternativeName>
</protein>